<evidence type="ECO:0000255" key="1"/>
<evidence type="ECO:0000256" key="2">
    <source>
        <dbReference type="SAM" id="MobiDB-lite"/>
    </source>
</evidence>
<evidence type="ECO:0000269" key="3">
    <source>
    </source>
</evidence>
<evidence type="ECO:0000303" key="4">
    <source>
    </source>
</evidence>
<evidence type="ECO:0007744" key="5">
    <source>
    </source>
</evidence>
<proteinExistence type="evidence at protein level"/>
<name>CC125_HUMAN</name>
<sequence length="511" mass="58629">MSKVARSSSESDVQLWETEEDDMTEGDLGYGLGRKPGGIYEIEFSHRSRKRSDGKNFSPPPFPRKGEERNEASFQYSKHKSQQDTFPQVSRISNYRRQSSTVDSNSELSNEELRQCLNETLEEVEMLKTELEASQRQLRGKEEALKILQSMAILGKATSHTQAVLQKTMEQNRSLEKEINALQWEIEFDHNRFKNIEESWIQKYDRLNCENAVLKENLKVKTEEIKMLKSDNAVLNQRYLEALAMLDIKQQKMAQENMCCDKSGFAEASGLELAVLGACLCHGPGGNPCSCARMAASTRKLLLQLKQELEILQKSKEEAYVMADAFRIAFEQQLMRKNDQALQLTQMDKMHKKATKWMNWKHLKEDGFPSPRSKKTFGQRLLGMLPSENSSKRMEDQDSPQEVLKMLIDLLNDKEEALAHQRKVSYMLARALEDKDTASNENKEKNPIKENFPFNNPWRKTSEFSVLGDPIHSSVCILNSVGCICSIQHSQIDPNYRTLKRSHSLPSSIIF</sequence>
<accession>Q86Z20</accession>
<accession>Q86Z19</accession>
<reference key="1">
    <citation type="journal article" date="2009" name="Int. J. Mol. Med.">
        <title>Role of Kenae/CCDC125 in cell motility through the deregulation of RhoGTPase.</title>
        <authorList>
            <person name="Araya N."/>
            <person name="Arimura H."/>
            <person name="Kawahara K."/>
            <person name="Yagishita N."/>
            <person name="Ishida J."/>
            <person name="Fujii R."/>
            <person name="Aratani S."/>
            <person name="Fujita H."/>
            <person name="Sato T."/>
            <person name="Yamano Y."/>
            <person name="Higuchi I."/>
            <person name="Osame M."/>
            <person name="Nishioka K."/>
            <person name="Fukamizu A."/>
            <person name="Arimura K."/>
            <person name="Maruyama I."/>
            <person name="Nakajima T."/>
        </authorList>
    </citation>
    <scope>NUCLEOTIDE SEQUENCE [MRNA] (ISOFORMS 1 AND 2)</scope>
    <scope>VARIANT MET-13</scope>
    <scope>FUNCTION</scope>
    <scope>SUBCELLULAR LOCATION</scope>
    <source>
        <tissue>Peripheral nerve</tissue>
    </source>
</reference>
<reference key="2">
    <citation type="journal article" date="2004" name="Nature">
        <title>The DNA sequence and comparative analysis of human chromosome 5.</title>
        <authorList>
            <person name="Schmutz J."/>
            <person name="Martin J."/>
            <person name="Terry A."/>
            <person name="Couronne O."/>
            <person name="Grimwood J."/>
            <person name="Lowry S."/>
            <person name="Gordon L.A."/>
            <person name="Scott D."/>
            <person name="Xie G."/>
            <person name="Huang W."/>
            <person name="Hellsten U."/>
            <person name="Tran-Gyamfi M."/>
            <person name="She X."/>
            <person name="Prabhakar S."/>
            <person name="Aerts A."/>
            <person name="Altherr M."/>
            <person name="Bajorek E."/>
            <person name="Black S."/>
            <person name="Branscomb E."/>
            <person name="Caoile C."/>
            <person name="Challacombe J.F."/>
            <person name="Chan Y.M."/>
            <person name="Denys M."/>
            <person name="Detter J.C."/>
            <person name="Escobar J."/>
            <person name="Flowers D."/>
            <person name="Fotopulos D."/>
            <person name="Glavina T."/>
            <person name="Gomez M."/>
            <person name="Gonzales E."/>
            <person name="Goodstein D."/>
            <person name="Grigoriev I."/>
            <person name="Groza M."/>
            <person name="Hammon N."/>
            <person name="Hawkins T."/>
            <person name="Haydu L."/>
            <person name="Israni S."/>
            <person name="Jett J."/>
            <person name="Kadner K."/>
            <person name="Kimball H."/>
            <person name="Kobayashi A."/>
            <person name="Lopez F."/>
            <person name="Lou Y."/>
            <person name="Martinez D."/>
            <person name="Medina C."/>
            <person name="Morgan J."/>
            <person name="Nandkeshwar R."/>
            <person name="Noonan J.P."/>
            <person name="Pitluck S."/>
            <person name="Pollard M."/>
            <person name="Predki P."/>
            <person name="Priest J."/>
            <person name="Ramirez L."/>
            <person name="Retterer J."/>
            <person name="Rodriguez A."/>
            <person name="Rogers S."/>
            <person name="Salamov A."/>
            <person name="Salazar A."/>
            <person name="Thayer N."/>
            <person name="Tice H."/>
            <person name="Tsai M."/>
            <person name="Ustaszewska A."/>
            <person name="Vo N."/>
            <person name="Wheeler J."/>
            <person name="Wu K."/>
            <person name="Yang J."/>
            <person name="Dickson M."/>
            <person name="Cheng J.-F."/>
            <person name="Eichler E.E."/>
            <person name="Olsen A."/>
            <person name="Pennacchio L.A."/>
            <person name="Rokhsar D.S."/>
            <person name="Richardson P."/>
            <person name="Lucas S.M."/>
            <person name="Myers R.M."/>
            <person name="Rubin E.M."/>
        </authorList>
    </citation>
    <scope>NUCLEOTIDE SEQUENCE [LARGE SCALE GENOMIC DNA]</scope>
</reference>
<reference key="3">
    <citation type="journal article" date="2008" name="Proc. Natl. Acad. Sci. U.S.A.">
        <title>A quantitative atlas of mitotic phosphorylation.</title>
        <authorList>
            <person name="Dephoure N."/>
            <person name="Zhou C."/>
            <person name="Villen J."/>
            <person name="Beausoleil S.A."/>
            <person name="Bakalarski C.E."/>
            <person name="Elledge S.J."/>
            <person name="Gygi S.P."/>
        </authorList>
    </citation>
    <scope>IDENTIFICATION BY MASS SPECTROMETRY [LARGE SCALE ANALYSIS]</scope>
    <source>
        <tissue>Cervix carcinoma</tissue>
    </source>
</reference>
<reference key="4">
    <citation type="journal article" date="2013" name="J. Proteome Res.">
        <title>Toward a comprehensive characterization of a human cancer cell phosphoproteome.</title>
        <authorList>
            <person name="Zhou H."/>
            <person name="Di Palma S."/>
            <person name="Preisinger C."/>
            <person name="Peng M."/>
            <person name="Polat A.N."/>
            <person name="Heck A.J."/>
            <person name="Mohammed S."/>
        </authorList>
    </citation>
    <scope>PHOSPHORYLATION [LARGE SCALE ANALYSIS] AT SER-504</scope>
    <scope>IDENTIFICATION BY MASS SPECTROMETRY [LARGE SCALE ANALYSIS]</scope>
    <source>
        <tissue>Cervix carcinoma</tissue>
    </source>
</reference>
<keyword id="KW-0025">Alternative splicing</keyword>
<keyword id="KW-0175">Coiled coil</keyword>
<keyword id="KW-0963">Cytoplasm</keyword>
<keyword id="KW-0597">Phosphoprotein</keyword>
<keyword id="KW-1267">Proteomics identification</keyword>
<keyword id="KW-1185">Reference proteome</keyword>
<feature type="chain" id="PRO_0000288812" description="Coiled-coil domain-containing protein 125">
    <location>
        <begin position="1"/>
        <end position="511"/>
    </location>
</feature>
<feature type="region of interest" description="Disordered" evidence="2">
    <location>
        <begin position="1"/>
        <end position="110"/>
    </location>
</feature>
<feature type="coiled-coil region" evidence="1">
    <location>
        <begin position="105"/>
        <end position="243"/>
    </location>
</feature>
<feature type="coiled-coil region" evidence="1">
    <location>
        <begin position="293"/>
        <end position="325"/>
    </location>
</feature>
<feature type="compositionally biased region" description="Polar residues" evidence="2">
    <location>
        <begin position="1"/>
        <end position="12"/>
    </location>
</feature>
<feature type="compositionally biased region" description="Basic and acidic residues" evidence="2">
    <location>
        <begin position="43"/>
        <end position="54"/>
    </location>
</feature>
<feature type="compositionally biased region" description="Polar residues" evidence="2">
    <location>
        <begin position="83"/>
        <end position="108"/>
    </location>
</feature>
<feature type="modified residue" description="Phosphoserine" evidence="5">
    <location>
        <position position="504"/>
    </location>
</feature>
<feature type="splice variant" id="VSP_025781" description="In isoform 2." evidence="4">
    <location>
        <begin position="1"/>
        <end position="125"/>
    </location>
</feature>
<feature type="sequence variant" id="VAR_032505" description="In dbSNP:rs10471774." evidence="3">
    <original>V</original>
    <variation>M</variation>
    <location>
        <position position="13"/>
    </location>
</feature>
<dbReference type="EMBL" id="AB024691">
    <property type="protein sequence ID" value="BAC57450.1"/>
    <property type="molecule type" value="mRNA"/>
</dbReference>
<dbReference type="EMBL" id="AB024692">
    <property type="protein sequence ID" value="BAC57451.1"/>
    <property type="molecule type" value="mRNA"/>
</dbReference>
<dbReference type="EMBL" id="AC145132">
    <property type="status" value="NOT_ANNOTATED_CDS"/>
    <property type="molecule type" value="Genomic_DNA"/>
</dbReference>
<dbReference type="CCDS" id="CCDS4000.1">
    <molecule id="Q86Z20-1"/>
</dbReference>
<dbReference type="CCDS" id="CCDS75255.1">
    <molecule id="Q86Z20-2"/>
</dbReference>
<dbReference type="RefSeq" id="NP_001284626.1">
    <molecule id="Q86Z20-2"/>
    <property type="nucleotide sequence ID" value="NM_001297697.2"/>
</dbReference>
<dbReference type="RefSeq" id="NP_789786.2">
    <molecule id="Q86Z20-1"/>
    <property type="nucleotide sequence ID" value="NM_176816.5"/>
</dbReference>
<dbReference type="RefSeq" id="XP_005248515.1">
    <molecule id="Q86Z20-1"/>
    <property type="nucleotide sequence ID" value="XM_005248458.6"/>
</dbReference>
<dbReference type="RefSeq" id="XP_005248520.1">
    <molecule id="Q86Z20-2"/>
    <property type="nucleotide sequence ID" value="XM_005248463.5"/>
</dbReference>
<dbReference type="RefSeq" id="XP_011541557.1">
    <molecule id="Q86Z20-1"/>
    <property type="nucleotide sequence ID" value="XM_011543255.4"/>
</dbReference>
<dbReference type="RefSeq" id="XP_011541558.1">
    <molecule id="Q86Z20-1"/>
    <property type="nucleotide sequence ID" value="XM_011543256.4"/>
</dbReference>
<dbReference type="RefSeq" id="XP_054185469.1">
    <molecule id="Q86Z20-1"/>
    <property type="nucleotide sequence ID" value="XM_054329494.1"/>
</dbReference>
<dbReference type="RefSeq" id="XP_054185470.1">
    <molecule id="Q86Z20-1"/>
    <property type="nucleotide sequence ID" value="XM_054329495.1"/>
</dbReference>
<dbReference type="RefSeq" id="XP_054185471.1">
    <molecule id="Q86Z20-1"/>
    <property type="nucleotide sequence ID" value="XM_054329496.1"/>
</dbReference>
<dbReference type="RefSeq" id="XP_054185494.1">
    <molecule id="Q86Z20-2"/>
    <property type="nucleotide sequence ID" value="XM_054329519.1"/>
</dbReference>
<dbReference type="RefSeq" id="XP_054207953.1">
    <molecule id="Q86Z20-1"/>
    <property type="nucleotide sequence ID" value="XM_054351978.1"/>
</dbReference>
<dbReference type="RefSeq" id="XP_054207954.1">
    <molecule id="Q86Z20-1"/>
    <property type="nucleotide sequence ID" value="XM_054351979.1"/>
</dbReference>
<dbReference type="RefSeq" id="XP_054207955.1">
    <molecule id="Q86Z20-1"/>
    <property type="nucleotide sequence ID" value="XM_054351980.1"/>
</dbReference>
<dbReference type="RefSeq" id="XP_054207979.1">
    <molecule id="Q86Z20-2"/>
    <property type="nucleotide sequence ID" value="XM_054352004.1"/>
</dbReference>
<dbReference type="SMR" id="Q86Z20"/>
<dbReference type="BioGRID" id="128423">
    <property type="interactions" value="69"/>
</dbReference>
<dbReference type="FunCoup" id="Q86Z20">
    <property type="interactions" value="579"/>
</dbReference>
<dbReference type="IntAct" id="Q86Z20">
    <property type="interactions" value="66"/>
</dbReference>
<dbReference type="STRING" id="9606.ENSP00000379754"/>
<dbReference type="GlyGen" id="Q86Z20">
    <property type="glycosylation" value="2 sites, 1 O-linked glycan (2 sites)"/>
</dbReference>
<dbReference type="iPTMnet" id="Q86Z20"/>
<dbReference type="PhosphoSitePlus" id="Q86Z20"/>
<dbReference type="BioMuta" id="CCDC125"/>
<dbReference type="DMDM" id="215273947"/>
<dbReference type="jPOST" id="Q86Z20"/>
<dbReference type="MassIVE" id="Q86Z20"/>
<dbReference type="PaxDb" id="9606-ENSP00000379754"/>
<dbReference type="PeptideAtlas" id="Q86Z20"/>
<dbReference type="ProteomicsDB" id="70497">
    <molecule id="Q86Z20-1"/>
</dbReference>
<dbReference type="ProteomicsDB" id="70498">
    <molecule id="Q86Z20-2"/>
</dbReference>
<dbReference type="Pumba" id="Q86Z20"/>
<dbReference type="Antibodypedia" id="50133">
    <property type="antibodies" value="38 antibodies from 7 providers"/>
</dbReference>
<dbReference type="DNASU" id="202243"/>
<dbReference type="Ensembl" id="ENST00000396496.7">
    <molecule id="Q86Z20-1"/>
    <property type="protein sequence ID" value="ENSP00000379754.2"/>
    <property type="gene ID" value="ENSG00000183323.13"/>
</dbReference>
<dbReference type="Ensembl" id="ENST00000396499.5">
    <molecule id="Q86Z20-1"/>
    <property type="protein sequence ID" value="ENSP00000379756.1"/>
    <property type="gene ID" value="ENSG00000183323.13"/>
</dbReference>
<dbReference type="Ensembl" id="ENST00000511257.1">
    <molecule id="Q86Z20-2"/>
    <property type="protein sequence ID" value="ENSP00000426795.1"/>
    <property type="gene ID" value="ENSG00000183323.13"/>
</dbReference>
<dbReference type="Ensembl" id="ENST00000612469.4">
    <molecule id="Q86Z20-2"/>
    <property type="protein sequence ID" value="ENSP00000484313.1"/>
    <property type="gene ID" value="ENSG00000277868.4"/>
</dbReference>
<dbReference type="Ensembl" id="ENST00000619386.1">
    <molecule id="Q86Z20-1"/>
    <property type="protein sequence ID" value="ENSP00000481190.1"/>
    <property type="gene ID" value="ENSG00000277868.4"/>
</dbReference>
<dbReference type="Ensembl" id="ENST00000620431.4">
    <molecule id="Q86Z20-1"/>
    <property type="protein sequence ID" value="ENSP00000479651.1"/>
    <property type="gene ID" value="ENSG00000277868.4"/>
</dbReference>
<dbReference type="GeneID" id="202243"/>
<dbReference type="KEGG" id="hsa:202243"/>
<dbReference type="MANE-Select" id="ENST00000396496.7">
    <property type="protein sequence ID" value="ENSP00000379754.2"/>
    <property type="RefSeq nucleotide sequence ID" value="NM_176816.5"/>
    <property type="RefSeq protein sequence ID" value="NP_789786.2"/>
</dbReference>
<dbReference type="UCSC" id="uc003jvv.2">
    <molecule id="Q86Z20-1"/>
    <property type="organism name" value="human"/>
</dbReference>
<dbReference type="AGR" id="HGNC:28924"/>
<dbReference type="CTD" id="202243"/>
<dbReference type="DisGeNET" id="202243"/>
<dbReference type="GeneCards" id="CCDC125"/>
<dbReference type="HGNC" id="HGNC:28924">
    <property type="gene designation" value="CCDC125"/>
</dbReference>
<dbReference type="HPA" id="ENSG00000183323">
    <property type="expression patterns" value="Low tissue specificity"/>
</dbReference>
<dbReference type="MIM" id="613781">
    <property type="type" value="gene"/>
</dbReference>
<dbReference type="neXtProt" id="NX_Q86Z20"/>
<dbReference type="OpenTargets" id="ENSG00000183323"/>
<dbReference type="PharmGKB" id="PA147358306"/>
<dbReference type="VEuPathDB" id="HostDB:ENSG00000183323"/>
<dbReference type="eggNOG" id="ENOG502QUQZ">
    <property type="taxonomic scope" value="Eukaryota"/>
</dbReference>
<dbReference type="GeneTree" id="ENSGT00440000039958"/>
<dbReference type="HOGENOM" id="CLU_035720_1_0_1"/>
<dbReference type="InParanoid" id="Q86Z20"/>
<dbReference type="OMA" id="MLQKTME"/>
<dbReference type="OrthoDB" id="9939852at2759"/>
<dbReference type="PAN-GO" id="Q86Z20">
    <property type="GO annotations" value="3 GO annotations based on evolutionary models"/>
</dbReference>
<dbReference type="PhylomeDB" id="Q86Z20"/>
<dbReference type="TreeFam" id="TF332719"/>
<dbReference type="PathwayCommons" id="Q86Z20"/>
<dbReference type="SignaLink" id="Q86Z20"/>
<dbReference type="BioGRID-ORCS" id="202243">
    <property type="hits" value="10 hits in 1156 CRISPR screens"/>
</dbReference>
<dbReference type="ChiTaRS" id="CCDC125">
    <property type="organism name" value="human"/>
</dbReference>
<dbReference type="GenomeRNAi" id="202243"/>
<dbReference type="Pharos" id="Q86Z20">
    <property type="development level" value="Tbio"/>
</dbReference>
<dbReference type="PRO" id="PR:Q86Z20"/>
<dbReference type="Proteomes" id="UP000005640">
    <property type="component" value="Chromosome 5"/>
</dbReference>
<dbReference type="RNAct" id="Q86Z20">
    <property type="molecule type" value="protein"/>
</dbReference>
<dbReference type="Bgee" id="ENSG00000183323">
    <property type="expression patterns" value="Expressed in bone marrow cell and 114 other cell types or tissues"/>
</dbReference>
<dbReference type="ExpressionAtlas" id="Q86Z20">
    <property type="expression patterns" value="baseline and differential"/>
</dbReference>
<dbReference type="GO" id="GO:0005737">
    <property type="term" value="C:cytoplasm"/>
    <property type="evidence" value="ECO:0000314"/>
    <property type="project" value="UniProtKB"/>
</dbReference>
<dbReference type="GO" id="GO:0042802">
    <property type="term" value="F:identical protein binding"/>
    <property type="evidence" value="ECO:0000353"/>
    <property type="project" value="IntAct"/>
</dbReference>
<dbReference type="GO" id="GO:0090630">
    <property type="term" value="P:activation of GTPase activity"/>
    <property type="evidence" value="ECO:0000314"/>
    <property type="project" value="UniProtKB"/>
</dbReference>
<dbReference type="GO" id="GO:2000146">
    <property type="term" value="P:negative regulation of cell motility"/>
    <property type="evidence" value="ECO:0000314"/>
    <property type="project" value="UniProtKB"/>
</dbReference>
<dbReference type="GO" id="GO:0035024">
    <property type="term" value="P:negative regulation of Rho protein signal transduction"/>
    <property type="evidence" value="ECO:0000314"/>
    <property type="project" value="UniProtKB"/>
</dbReference>
<dbReference type="InterPro" id="IPR034608">
    <property type="entry name" value="CCDC125"/>
</dbReference>
<dbReference type="PANTHER" id="PTHR28616">
    <property type="entry name" value="COILED-COIL DOMAIN-CONTAINING PROTEIN 125"/>
    <property type="match status" value="1"/>
</dbReference>
<dbReference type="PANTHER" id="PTHR28616:SF1">
    <property type="entry name" value="COILED-COIL DOMAIN-CONTAINING PROTEIN 125"/>
    <property type="match status" value="1"/>
</dbReference>
<gene>
    <name type="primary">CCDC125</name>
    <name type="synonym">KENAE</name>
</gene>
<comment type="function">
    <text evidence="3">May be involved in the regulation of cell migration.</text>
</comment>
<comment type="interaction">
    <interactant intactId="EBI-11977221">
        <id>Q86Z20</id>
    </interactant>
    <interactant intactId="EBI-8643161">
        <id>Q9NX04</id>
        <label>AIRIM</label>
    </interactant>
    <organismsDiffer>false</organismsDiffer>
    <experiments>3</experiments>
</comment>
<comment type="interaction">
    <interactant intactId="EBI-11977221">
        <id>Q86Z20</id>
    </interactant>
    <interactant intactId="EBI-745689">
        <id>Q7L5A3</id>
        <label>ATOSB</label>
    </interactant>
    <organismsDiffer>false</organismsDiffer>
    <experiments>3</experiments>
</comment>
<comment type="interaction">
    <interactant intactId="EBI-11977221">
        <id>Q86Z20</id>
    </interactant>
    <interactant intactId="EBI-1035195">
        <id>P18075</id>
        <label>BMP7</label>
    </interactant>
    <organismsDiffer>false</organismsDiffer>
    <experiments>3</experiments>
</comment>
<comment type="interaction">
    <interactant intactId="EBI-11977221">
        <id>Q86Z20</id>
    </interactant>
    <interactant intactId="EBI-10226774">
        <id>Q0VAL7</id>
        <label>C21orf58</label>
    </interactant>
    <organismsDiffer>false</organismsDiffer>
    <experiments>3</experiments>
</comment>
<comment type="interaction">
    <interactant intactId="EBI-11977221">
        <id>Q86Z20</id>
    </interactant>
    <interactant intactId="EBI-12030460">
        <id>Q8WYQ4-2</id>
        <label>C22orf15</label>
    </interactant>
    <organismsDiffer>false</organismsDiffer>
    <experiments>3</experiments>
</comment>
<comment type="interaction">
    <interactant intactId="EBI-11977221">
        <id>Q86Z20</id>
    </interactant>
    <interactant intactId="EBI-11977221">
        <id>Q86Z20</id>
        <label>CCDC125</label>
    </interactant>
    <organismsDiffer>false</organismsDiffer>
    <experiments>3</experiments>
</comment>
<comment type="interaction">
    <interactant intactId="EBI-11977221">
        <id>Q86Z20</id>
    </interactant>
    <interactant intactId="EBI-3905829">
        <id>P51959</id>
        <label>CCNG1</label>
    </interactant>
    <organismsDiffer>false</organismsDiffer>
    <experiments>3</experiments>
</comment>
<comment type="interaction">
    <interactant intactId="EBI-11977221">
        <id>Q86Z20</id>
    </interactant>
    <interactant intactId="EBI-396137">
        <id>Q9UJX2</id>
        <label>CDC23</label>
    </interactant>
    <organismsDiffer>false</organismsDiffer>
    <experiments>3</experiments>
</comment>
<comment type="interaction">
    <interactant intactId="EBI-11977221">
        <id>Q86Z20</id>
    </interactant>
    <interactant intactId="EBI-746238">
        <id>Q07002</id>
        <label>CDK18</label>
    </interactant>
    <organismsDiffer>false</organismsDiffer>
    <experiments>3</experiments>
</comment>
<comment type="interaction">
    <interactant intactId="EBI-11977221">
        <id>Q86Z20</id>
    </interactant>
    <interactant intactId="EBI-372775">
        <id>Q96GE4</id>
        <label>CEP95</label>
    </interactant>
    <organismsDiffer>false</organismsDiffer>
    <experiments>3</experiments>
</comment>
<comment type="interaction">
    <interactant intactId="EBI-11977221">
        <id>Q86Z20</id>
    </interactant>
    <interactant intactId="EBI-353818">
        <id>O15371</id>
        <label>EIF3D</label>
    </interactant>
    <organismsDiffer>false</organismsDiffer>
    <experiments>3</experiments>
</comment>
<comment type="interaction">
    <interactant intactId="EBI-11977221">
        <id>Q86Z20</id>
    </interactant>
    <interactant intactId="EBI-11977223">
        <id>O95990-4</id>
        <label>FAM107A</label>
    </interactant>
    <organismsDiffer>false</organismsDiffer>
    <experiments>3</experiments>
</comment>
<comment type="interaction">
    <interactant intactId="EBI-11977221">
        <id>Q86Z20</id>
    </interactant>
    <interactant intactId="EBI-719941">
        <id>Q3B820</id>
        <label>FAM161A</label>
    </interactant>
    <organismsDiffer>false</organismsDiffer>
    <experiments>3</experiments>
</comment>
<comment type="interaction">
    <interactant intactId="EBI-11977221">
        <id>Q86Z20</id>
    </interactant>
    <interactant intactId="EBI-7225287">
        <id>Q96MY7</id>
        <label>FAM161B</label>
    </interactant>
    <organismsDiffer>false</organismsDiffer>
    <experiments>3</experiments>
</comment>
<comment type="interaction">
    <interactant intactId="EBI-11977221">
        <id>Q86Z20</id>
    </interactant>
    <interactant intactId="EBI-9247344">
        <id>Q8NA70</id>
        <label>FAM47B</label>
    </interactant>
    <organismsDiffer>false</organismsDiffer>
    <experiments>3</experiments>
</comment>
<comment type="interaction">
    <interactant intactId="EBI-11977221">
        <id>Q86Z20</id>
    </interactant>
    <interactant intactId="EBI-719415">
        <id>Q4VC44</id>
        <label>FLYWCH1</label>
    </interactant>
    <organismsDiffer>false</organismsDiffer>
    <experiments>3</experiments>
</comment>
<comment type="interaction">
    <interactant intactId="EBI-11977221">
        <id>Q86Z20</id>
    </interactant>
    <interactant intactId="EBI-1052570">
        <id>O95995</id>
        <label>GAS8</label>
    </interactant>
    <organismsDiffer>false</organismsDiffer>
    <experiments>3</experiments>
</comment>
<comment type="interaction">
    <interactant intactId="EBI-11977221">
        <id>Q86Z20</id>
    </interactant>
    <interactant intactId="EBI-744104">
        <id>P55040</id>
        <label>GEM</label>
    </interactant>
    <organismsDiffer>false</organismsDiffer>
    <experiments>3</experiments>
</comment>
<comment type="interaction">
    <interactant intactId="EBI-11977221">
        <id>Q86Z20</id>
    </interactant>
    <interactant intactId="EBI-11956675">
        <id>Q9GZV7</id>
        <label>HAPLN2</label>
    </interactant>
    <organismsDiffer>false</organismsDiffer>
    <experiments>3</experiments>
</comment>
<comment type="interaction">
    <interactant intactId="EBI-11977221">
        <id>Q86Z20</id>
    </interactant>
    <interactant intactId="EBI-11953488">
        <id>P56524-2</id>
        <label>HDAC4</label>
    </interactant>
    <organismsDiffer>false</organismsDiffer>
    <experiments>3</experiments>
</comment>
<comment type="interaction">
    <interactant intactId="EBI-11977221">
        <id>Q86Z20</id>
    </interactant>
    <interactant intactId="EBI-399080">
        <id>Q92993</id>
        <label>KAT5</label>
    </interactant>
    <organismsDiffer>false</organismsDiffer>
    <experiments>3</experiments>
</comment>
<comment type="interaction">
    <interactant intactId="EBI-11977221">
        <id>Q86Z20</id>
    </interactant>
    <interactant intactId="EBI-8472129">
        <id>Q9HAQ2</id>
        <label>KIF9</label>
    </interactant>
    <organismsDiffer>false</organismsDiffer>
    <experiments>3</experiments>
</comment>
<comment type="interaction">
    <interactant intactId="EBI-11977221">
        <id>Q86Z20</id>
    </interactant>
    <interactant intactId="EBI-11953846">
        <id>Q52LG2</id>
        <label>KRTAP13-2</label>
    </interactant>
    <organismsDiffer>false</organismsDiffer>
    <experiments>3</experiments>
</comment>
<comment type="interaction">
    <interactant intactId="EBI-11977221">
        <id>Q86Z20</id>
    </interactant>
    <interactant intactId="EBI-11973993">
        <id>Q5TA81</id>
        <label>LCE2C</label>
    </interactant>
    <organismsDiffer>false</organismsDiffer>
    <experiments>3</experiments>
</comment>
<comment type="interaction">
    <interactant intactId="EBI-11977221">
        <id>Q86Z20</id>
    </interactant>
    <interactant intactId="EBI-366238">
        <id>P12882</id>
        <label>MYH1</label>
    </interactant>
    <organismsDiffer>false</organismsDiffer>
    <experiments>3</experiments>
</comment>
<comment type="interaction">
    <interactant intactId="EBI-11977221">
        <id>Q86Z20</id>
    </interactant>
    <interactant intactId="EBI-2880203">
        <id>O76041</id>
        <label>NEBL</label>
    </interactant>
    <organismsDiffer>false</organismsDiffer>
    <experiments>3</experiments>
</comment>
<comment type="interaction">
    <interactant intactId="EBI-11977221">
        <id>Q86Z20</id>
    </interactant>
    <interactant intactId="EBI-11110981">
        <id>Q96L73-2</id>
        <label>NSD1</label>
    </interactant>
    <organismsDiffer>false</organismsDiffer>
    <experiments>3</experiments>
</comment>
<comment type="interaction">
    <interactant intactId="EBI-11977221">
        <id>Q86Z20</id>
    </interactant>
    <interactant intactId="EBI-12028784">
        <id>Q6X4W1-2</id>
        <label>NSMF</label>
    </interactant>
    <organismsDiffer>false</organismsDiffer>
    <experiments>3</experiments>
</comment>
<comment type="interaction">
    <interactant intactId="EBI-11977221">
        <id>Q86Z20</id>
    </interactant>
    <interactant intactId="EBI-12038159">
        <id>Q8NHW6</id>
        <label>OTOS</label>
    </interactant>
    <organismsDiffer>false</organismsDiffer>
    <experiments>3</experiments>
</comment>
<comment type="interaction">
    <interactant intactId="EBI-11977221">
        <id>Q86Z20</id>
    </interactant>
    <interactant intactId="EBI-10987518">
        <id>Q99959-2</id>
        <label>PKP2</label>
    </interactant>
    <organismsDiffer>false</organismsDiffer>
    <experiments>3</experiments>
</comment>
<comment type="interaction">
    <interactant intactId="EBI-11977221">
        <id>Q86Z20</id>
    </interactant>
    <interactant intactId="EBI-744322">
        <id>O43395</id>
        <label>PRPF3</label>
    </interactant>
    <organismsDiffer>false</organismsDiffer>
    <experiments>3</experiments>
</comment>
<comment type="interaction">
    <interactant intactId="EBI-11977221">
        <id>Q86Z20</id>
    </interactant>
    <interactant intactId="EBI-12164121">
        <id>Q15257-2</id>
        <label>PTPA</label>
    </interactant>
    <organismsDiffer>false</organismsDiffer>
    <experiments>3</experiments>
</comment>
<comment type="interaction">
    <interactant intactId="EBI-11977221">
        <id>Q86Z20</id>
    </interactant>
    <interactant intactId="EBI-752037">
        <id>P61019</id>
        <label>RAB2A</label>
    </interactant>
    <organismsDiffer>false</organismsDiffer>
    <experiments>3</experiments>
</comment>
<comment type="interaction">
    <interactant intactId="EBI-11977221">
        <id>Q86Z20</id>
    </interactant>
    <interactant intactId="EBI-12010512">
        <id>Q96MK2</id>
        <label>RIPOR3</label>
    </interactant>
    <organismsDiffer>false</organismsDiffer>
    <experiments>3</experiments>
</comment>
<comment type="interaction">
    <interactant intactId="EBI-11977221">
        <id>Q86Z20</id>
    </interactant>
    <interactant intactId="EBI-476295">
        <id>P31947</id>
        <label>SFN</label>
    </interactant>
    <organismsDiffer>false</organismsDiffer>
    <experiments>3</experiments>
</comment>
<comment type="interaction">
    <interactant intactId="EBI-11977221">
        <id>Q86Z20</id>
    </interactant>
    <interactant intactId="EBI-632715">
        <id>Q13573</id>
        <label>SNW1</label>
    </interactant>
    <organismsDiffer>false</organismsDiffer>
    <experiments>3</experiments>
</comment>
<comment type="interaction">
    <interactant intactId="EBI-11977221">
        <id>Q86Z20</id>
    </interactant>
    <interactant intactId="EBI-12020542">
        <id>Q96LM5</id>
        <label>SPMIP2</label>
    </interactant>
    <organismsDiffer>false</organismsDiffer>
    <experiments>3</experiments>
</comment>
<comment type="interaction">
    <interactant intactId="EBI-11977221">
        <id>Q86Z20</id>
    </interactant>
    <interactant intactId="EBI-714135">
        <id>O75558</id>
        <label>STX11</label>
    </interactant>
    <organismsDiffer>false</organismsDiffer>
    <experiments>3</experiments>
</comment>
<comment type="interaction">
    <interactant intactId="EBI-11977221">
        <id>Q86Z20</id>
    </interactant>
    <interactant intactId="EBI-740781">
        <id>Q9BT92</id>
        <label>TCHP</label>
    </interactant>
    <organismsDiffer>false</organismsDiffer>
    <experiments>3</experiments>
</comment>
<comment type="interaction">
    <interactant intactId="EBI-11977221">
        <id>Q86Z20</id>
    </interactant>
    <interactant intactId="EBI-747736">
        <id>Q15561</id>
        <label>TEAD4</label>
    </interactant>
    <organismsDiffer>false</organismsDiffer>
    <experiments>3</experiments>
</comment>
<comment type="interaction">
    <interactant intactId="EBI-11977221">
        <id>Q86Z20</id>
    </interactant>
    <interactant intactId="EBI-2820256">
        <id>Q14142</id>
        <label>TRIM14</label>
    </interactant>
    <organismsDiffer>false</organismsDiffer>
    <experiments>3</experiments>
</comment>
<comment type="interaction">
    <interactant intactId="EBI-11977221">
        <id>Q86Z20</id>
    </interactant>
    <interactant intactId="EBI-10241197">
        <id>Q3SY00</id>
        <label>TSGA10IP</label>
    </interactant>
    <organismsDiffer>false</organismsDiffer>
    <experiments>3</experiments>
</comment>
<comment type="interaction">
    <interactant intactId="EBI-11977221">
        <id>Q86Z20</id>
    </interactant>
    <interactant intactId="EBI-350510">
        <id>Q9BZF9</id>
        <label>UACA</label>
    </interactant>
    <organismsDiffer>false</organismsDiffer>
    <experiments>3</experiments>
</comment>
<comment type="interaction">
    <interactant intactId="EBI-11977221">
        <id>Q86Z20</id>
    </interactant>
    <interactant intactId="EBI-356498">
        <id>P62258</id>
        <label>YWHAE</label>
    </interactant>
    <organismsDiffer>false</organismsDiffer>
    <experiments>3</experiments>
</comment>
<comment type="interaction">
    <interactant intactId="EBI-11977221">
        <id>Q86Z20</id>
    </interactant>
    <interactant intactId="EBI-306940">
        <id>Q04917</id>
        <label>YWHAH</label>
    </interactant>
    <organismsDiffer>false</organismsDiffer>
    <experiments>3</experiments>
</comment>
<comment type="interaction">
    <interactant intactId="EBI-11977221">
        <id>Q86Z20</id>
    </interactant>
    <interactant intactId="EBI-359854">
        <id>P27348</id>
        <label>YWHAQ</label>
    </interactant>
    <organismsDiffer>false</organismsDiffer>
    <experiments>3</experiments>
</comment>
<comment type="interaction">
    <interactant intactId="EBI-11977221">
        <id>Q86Z20</id>
    </interactant>
    <interactant intactId="EBI-347088">
        <id>P63104</id>
        <label>YWHAZ</label>
    </interactant>
    <organismsDiffer>false</organismsDiffer>
    <experiments>3</experiments>
</comment>
<comment type="interaction">
    <interactant intactId="EBI-11977221">
        <id>Q86Z20</id>
    </interactant>
    <interactant intactId="EBI-2555749">
        <id>Q6P2D0</id>
        <label>ZFP1</label>
    </interactant>
    <organismsDiffer>false</organismsDiffer>
    <experiments>3</experiments>
</comment>
<comment type="interaction">
    <interactant intactId="EBI-11977221">
        <id>Q86Z20</id>
    </interactant>
    <interactant intactId="EBI-8656416">
        <id>Q68DK2-5</id>
        <label>ZFYVE26</label>
    </interactant>
    <organismsDiffer>false</organismsDiffer>
    <experiments>3</experiments>
</comment>
<comment type="interaction">
    <interactant intactId="EBI-11977221">
        <id>Q86Z20</id>
    </interactant>
    <interactant intactId="EBI-741694">
        <id>P49910</id>
        <label>ZNF165</label>
    </interactant>
    <organismsDiffer>false</organismsDiffer>
    <experiments>3</experiments>
</comment>
<comment type="interaction">
    <interactant intactId="EBI-11977221">
        <id>Q86Z20</id>
    </interactant>
    <interactant intactId="EBI-1105361">
        <id>Q9UIE0</id>
        <label>ZNF230</label>
    </interactant>
    <organismsDiffer>false</organismsDiffer>
    <experiments>3</experiments>
</comment>
<comment type="interaction">
    <interactant intactId="EBI-11977221">
        <id>Q86Z20</id>
    </interactant>
    <interactant intactId="EBI-10177272">
        <id>P15622-3</id>
        <label>ZNF250</label>
    </interactant>
    <organismsDiffer>false</organismsDiffer>
    <experiments>3</experiments>
</comment>
<comment type="interaction">
    <interactant intactId="EBI-11977221">
        <id>Q86Z20</id>
    </interactant>
    <interactant intactId="EBI-1965483">
        <id>P17041</id>
        <label>ZNF32</label>
    </interactant>
    <organismsDiffer>false</organismsDiffer>
    <experiments>3</experiments>
</comment>
<comment type="interaction">
    <interactant intactId="EBI-11977221">
        <id>Q86Z20</id>
    </interactant>
    <interactant intactId="EBI-714987">
        <id>Q9Y3M9</id>
        <label>ZNF337</label>
    </interactant>
    <organismsDiffer>false</organismsDiffer>
    <experiments>3</experiments>
</comment>
<comment type="interaction">
    <interactant intactId="EBI-11977221">
        <id>Q86Z20</id>
    </interactant>
    <interactant intactId="EBI-10252492">
        <id>Q6P1L6</id>
        <label>ZNF343</label>
    </interactant>
    <organismsDiffer>false</organismsDiffer>
    <experiments>3</experiments>
</comment>
<comment type="interaction">
    <interactant intactId="EBI-11977221">
        <id>Q86Z20</id>
    </interactant>
    <interactant intactId="EBI-740727">
        <id>Q8TAU3</id>
        <label>ZNF417</label>
    </interactant>
    <organismsDiffer>false</organismsDiffer>
    <experiments>3</experiments>
</comment>
<comment type="interaction">
    <interactant intactId="EBI-11977221">
        <id>Q86Z20</id>
    </interactant>
    <interactant intactId="EBI-8489702">
        <id>Q9C0F3</id>
        <label>ZNF436</label>
    </interactant>
    <organismsDiffer>false</organismsDiffer>
    <experiments>3</experiments>
</comment>
<comment type="interaction">
    <interactant intactId="EBI-11977221">
        <id>Q86Z20</id>
    </interactant>
    <interactant intactId="EBI-2555731">
        <id>Q9H707</id>
        <label>ZNF552</label>
    </interactant>
    <organismsDiffer>false</organismsDiffer>
    <experiments>3</experiments>
</comment>
<comment type="interaction">
    <interactant intactId="EBI-11977221">
        <id>Q86Z20</id>
    </interactant>
    <interactant intactId="EBI-10699005">
        <id>Q8N988-2</id>
        <label>ZNF557</label>
    </interactant>
    <organismsDiffer>false</organismsDiffer>
    <experiments>3</experiments>
</comment>
<comment type="interaction">
    <interactant intactId="EBI-11977221">
        <id>Q86Z20</id>
    </interactant>
    <interactant intactId="EBI-10273713">
        <id>Q8TBZ8</id>
        <label>ZNF564</label>
    </interactant>
    <organismsDiffer>false</organismsDiffer>
    <experiments>3</experiments>
</comment>
<comment type="interaction">
    <interactant intactId="EBI-11977221">
        <id>Q86Z20</id>
    </interactant>
    <interactant intactId="EBI-6427977">
        <id>Q96SQ5</id>
        <label>ZNF587</label>
    </interactant>
    <organismsDiffer>false</organismsDiffer>
    <experiments>3</experiments>
</comment>
<comment type="interaction">
    <interactant intactId="EBI-11977221">
        <id>Q86Z20</id>
    </interactant>
    <interactant intactId="EBI-745775">
        <id>Q96H86</id>
        <label>ZNF764</label>
    </interactant>
    <organismsDiffer>false</organismsDiffer>
    <experiments>3</experiments>
</comment>
<comment type="interaction">
    <interactant intactId="EBI-11977221">
        <id>Q86Z20</id>
    </interactant>
    <interactant intactId="EBI-10240849">
        <id>Q3KQV3</id>
        <label>ZNF792</label>
    </interactant>
    <organismsDiffer>false</organismsDiffer>
    <experiments>3</experiments>
</comment>
<comment type="interaction">
    <interactant intactId="EBI-11977221">
        <id>Q86Z20</id>
    </interactant>
    <interactant intactId="EBI-11962574">
        <id>Q96EG3</id>
        <label>ZNF837</label>
    </interactant>
    <organismsDiffer>false</organismsDiffer>
    <experiments>3</experiments>
</comment>
<comment type="interaction">
    <interactant intactId="EBI-11977221">
        <id>Q86Z20</id>
    </interactant>
    <interactant intactId="EBI-18515265">
        <id>P0CG24</id>
        <label>ZNF883</label>
    </interactant>
    <organismsDiffer>false</organismsDiffer>
    <experiments>3</experiments>
</comment>
<comment type="subcellular location">
    <subcellularLocation>
        <location evidence="3">Cytoplasm</location>
    </subcellularLocation>
</comment>
<comment type="alternative products">
    <event type="alternative splicing"/>
    <isoform>
        <id>Q86Z20-1</id>
        <name>1</name>
        <name>Kenae-1</name>
        <sequence type="displayed"/>
    </isoform>
    <isoform>
        <id>Q86Z20-2</id>
        <name>2</name>
        <name>Kenae-2</name>
        <sequence type="described" ref="VSP_025781"/>
    </isoform>
</comment>
<protein>
    <recommendedName>
        <fullName>Coiled-coil domain-containing protein 125</fullName>
    </recommendedName>
    <alternativeName>
        <fullName>Protein kenae</fullName>
    </alternativeName>
</protein>
<organism>
    <name type="scientific">Homo sapiens</name>
    <name type="common">Human</name>
    <dbReference type="NCBI Taxonomy" id="9606"/>
    <lineage>
        <taxon>Eukaryota</taxon>
        <taxon>Metazoa</taxon>
        <taxon>Chordata</taxon>
        <taxon>Craniata</taxon>
        <taxon>Vertebrata</taxon>
        <taxon>Euteleostomi</taxon>
        <taxon>Mammalia</taxon>
        <taxon>Eutheria</taxon>
        <taxon>Euarchontoglires</taxon>
        <taxon>Primates</taxon>
        <taxon>Haplorrhini</taxon>
        <taxon>Catarrhini</taxon>
        <taxon>Hominidae</taxon>
        <taxon>Homo</taxon>
    </lineage>
</organism>